<evidence type="ECO:0000250" key="1">
    <source>
        <dbReference type="UniProtKB" id="P97612"/>
    </source>
</evidence>
<evidence type="ECO:0000255" key="2"/>
<evidence type="ECO:0000255" key="3">
    <source>
        <dbReference type="PROSITE-ProRule" id="PRU00498"/>
    </source>
</evidence>
<evidence type="ECO:0000269" key="4">
    <source>
    </source>
</evidence>
<evidence type="ECO:0000269" key="5">
    <source>
    </source>
</evidence>
<evidence type="ECO:0000305" key="6"/>
<sequence length="592" mass="64011">MKGPITFLLQLGAVYTSIASACKLSDLPILSAHGSYGSNQCIAFGGEQAVIDRLIDPQACDIPKLIEATADQLQDGLTKGCFTSVDLVKVRITLQTPYRQGNVLIIVVVQTYVARIAEVNSTVRAVTEINPDALTIAKQMDNERKMGKLRGPLHGLPIVIKNNIFTDDKMSSTAGSYAIFGARTSADATVATKLREAGLVIMGKSGASQWANFRSLNSTNGWSAYGGQVTAAYIKNQDPSGSSSGSGVASDLGLAFATLGTETSGSIVSPADKSNIVGLKPTVGLTSRRFVVPISERQDTVGPMARSVKDAAYLLQVIAGKDSNDNYTSAIPFDTIPDYVKACDINALKGKRIGVPRNVIKIFGSPQTVVDQFNQALAVMKKAGAIIVENTDFTSFAEFAQSPIPDDILYADSLTNLPAFFKQLKVNPHNITDLESLRRFTQHHRLEEYPSRDTARWDIALQKGIKNTDPKFWPMYQKNVKFGNEGGILGALRRHKLDAAVLPTDLSPYIPALIGSPIITVPMGVYPNGTKVNHDRELVTSGPGIPIGIGFMGDLWSEEKLIGLAYAFEQKTHARPKLKRFIQPKKEVKGIL</sequence>
<comment type="subcellular location">
    <subcellularLocation>
        <location evidence="4 5">Secreted</location>
    </subcellularLocation>
</comment>
<comment type="similarity">
    <text evidence="6">Belongs to the amidase family.</text>
</comment>
<reference key="1">
    <citation type="journal article" date="2011" name="Genome Biol.">
        <title>Comparative and functional genomics provide insights into the pathogenicity of dermatophytic fungi.</title>
        <authorList>
            <person name="Burmester A."/>
            <person name="Shelest E."/>
            <person name="Gloeckner G."/>
            <person name="Heddergott C."/>
            <person name="Schindler S."/>
            <person name="Staib P."/>
            <person name="Heidel A."/>
            <person name="Felder M."/>
            <person name="Petzold A."/>
            <person name="Szafranski K."/>
            <person name="Feuermann M."/>
            <person name="Pedruzzi I."/>
            <person name="Priebe S."/>
            <person name="Groth M."/>
            <person name="Winkler R."/>
            <person name="Li W."/>
            <person name="Kniemeyer O."/>
            <person name="Schroeckh V."/>
            <person name="Hertweck C."/>
            <person name="Hube B."/>
            <person name="White T.C."/>
            <person name="Platzer M."/>
            <person name="Guthke R."/>
            <person name="Heitman J."/>
            <person name="Woestemeyer J."/>
            <person name="Zipfel P.F."/>
            <person name="Monod M."/>
            <person name="Brakhage A.A."/>
        </authorList>
    </citation>
    <scope>NUCLEOTIDE SEQUENCE [LARGE SCALE GENOMIC DNA]</scope>
    <scope>IDENTIFICATION BY MASS SPECTROMETRY</scope>
    <scope>SUBCELLULAR LOCATION</scope>
    <source>
        <strain>ATCC MYA-4681 / CBS 112371</strain>
    </source>
</reference>
<reference key="2">
    <citation type="journal article" date="2011" name="Proteomics">
        <title>Identification of novel secreted proteases during extracellular proteolysis by dermatophytes at acidic pH.</title>
        <authorList>
            <person name="Sriranganadane D."/>
            <person name="Waridel P."/>
            <person name="Salamin K."/>
            <person name="Feuermann M."/>
            <person name="Mignon B."/>
            <person name="Staib P."/>
            <person name="Neuhaus J.M."/>
            <person name="Quadroni M."/>
            <person name="Monod M."/>
        </authorList>
    </citation>
    <scope>IDENTIFICATION BY MASS SPECTROMETRY</scope>
    <scope>SUBCELLULAR LOCATION</scope>
</reference>
<organism>
    <name type="scientific">Arthroderma benhamiae (strain ATCC MYA-4681 / CBS 112371)</name>
    <name type="common">Trichophyton mentagrophytes</name>
    <dbReference type="NCBI Taxonomy" id="663331"/>
    <lineage>
        <taxon>Eukaryota</taxon>
        <taxon>Fungi</taxon>
        <taxon>Dikarya</taxon>
        <taxon>Ascomycota</taxon>
        <taxon>Pezizomycotina</taxon>
        <taxon>Eurotiomycetes</taxon>
        <taxon>Eurotiomycetidae</taxon>
        <taxon>Onygenales</taxon>
        <taxon>Arthrodermataceae</taxon>
        <taxon>Trichophyton</taxon>
    </lineage>
</organism>
<dbReference type="EC" id="3.5.1.-" evidence="6"/>
<dbReference type="EMBL" id="ABSU01000033">
    <property type="protein sequence ID" value="EFE30174.1"/>
    <property type="molecule type" value="Genomic_DNA"/>
</dbReference>
<dbReference type="RefSeq" id="XP_003010814.1">
    <property type="nucleotide sequence ID" value="XM_003010768.1"/>
</dbReference>
<dbReference type="SMR" id="D4B3C8"/>
<dbReference type="STRING" id="663331.D4B3C8"/>
<dbReference type="GeneID" id="9524929"/>
<dbReference type="KEGG" id="abe:ARB_02965"/>
<dbReference type="eggNOG" id="KOG1211">
    <property type="taxonomic scope" value="Eukaryota"/>
</dbReference>
<dbReference type="HOGENOM" id="CLU_009600_14_1_1"/>
<dbReference type="OMA" id="HANDSWA"/>
<dbReference type="Proteomes" id="UP000008866">
    <property type="component" value="Unassembled WGS sequence"/>
</dbReference>
<dbReference type="GO" id="GO:0005576">
    <property type="term" value="C:extracellular region"/>
    <property type="evidence" value="ECO:0007669"/>
    <property type="project" value="UniProtKB-SubCell"/>
</dbReference>
<dbReference type="GO" id="GO:0016787">
    <property type="term" value="F:hydrolase activity"/>
    <property type="evidence" value="ECO:0007669"/>
    <property type="project" value="UniProtKB-KW"/>
</dbReference>
<dbReference type="Gene3D" id="3.90.1300.10">
    <property type="entry name" value="Amidase signature (AS) domain"/>
    <property type="match status" value="1"/>
</dbReference>
<dbReference type="InterPro" id="IPR023631">
    <property type="entry name" value="Amidase_dom"/>
</dbReference>
<dbReference type="InterPro" id="IPR036928">
    <property type="entry name" value="AS_sf"/>
</dbReference>
<dbReference type="PANTHER" id="PTHR42678">
    <property type="entry name" value="AMIDASE"/>
    <property type="match status" value="1"/>
</dbReference>
<dbReference type="PANTHER" id="PTHR42678:SF34">
    <property type="entry name" value="OS04G0183300 PROTEIN"/>
    <property type="match status" value="1"/>
</dbReference>
<dbReference type="Pfam" id="PF01425">
    <property type="entry name" value="Amidase"/>
    <property type="match status" value="1"/>
</dbReference>
<dbReference type="SUPFAM" id="SSF75304">
    <property type="entry name" value="Amidase signature (AS) enzymes"/>
    <property type="match status" value="1"/>
</dbReference>
<proteinExistence type="evidence at protein level"/>
<accession>D4B3C8</accession>
<protein>
    <recommendedName>
        <fullName evidence="6">Putative amidase ARB_02965</fullName>
        <ecNumber evidence="6">3.5.1.-</ecNumber>
    </recommendedName>
</protein>
<gene>
    <name type="ORF">ARB_02965</name>
</gene>
<feature type="signal peptide" evidence="2">
    <location>
        <begin position="1"/>
        <end position="21"/>
    </location>
</feature>
<feature type="chain" id="PRO_0000434657" description="Putative amidase ARB_02965" evidence="2">
    <location>
        <begin position="22"/>
        <end position="592"/>
    </location>
</feature>
<feature type="active site" description="Charge relay system" evidence="1">
    <location>
        <position position="161"/>
    </location>
</feature>
<feature type="active site" description="Charge relay system" evidence="1">
    <location>
        <position position="242"/>
    </location>
</feature>
<feature type="active site" description="Acyl-ester intermediate" evidence="1">
    <location>
        <position position="266"/>
    </location>
</feature>
<feature type="binding site" evidence="1">
    <location>
        <position position="242"/>
    </location>
    <ligand>
        <name>substrate</name>
    </ligand>
</feature>
<feature type="binding site" evidence="1">
    <location>
        <begin position="263"/>
        <end position="266"/>
    </location>
    <ligand>
        <name>substrate</name>
    </ligand>
</feature>
<feature type="glycosylation site" description="N-linked (GlcNAc...) asparagine" evidence="3">
    <location>
        <position position="120"/>
    </location>
</feature>
<feature type="glycosylation site" description="N-linked (GlcNAc...) asparagine" evidence="3">
    <location>
        <position position="217"/>
    </location>
</feature>
<feature type="glycosylation site" description="N-linked (GlcNAc...) asparagine" evidence="3">
    <location>
        <position position="326"/>
    </location>
</feature>
<feature type="glycosylation site" description="N-linked (GlcNAc...) asparagine" evidence="3">
    <location>
        <position position="430"/>
    </location>
</feature>
<feature type="glycosylation site" description="N-linked (GlcNAc...) asparagine" evidence="3">
    <location>
        <position position="528"/>
    </location>
</feature>
<keyword id="KW-0325">Glycoprotein</keyword>
<keyword id="KW-0378">Hydrolase</keyword>
<keyword id="KW-1185">Reference proteome</keyword>
<keyword id="KW-0964">Secreted</keyword>
<keyword id="KW-0732">Signal</keyword>
<name>A2965_ARTBC</name>